<feature type="chain" id="PRO_1000122194" description="Integration host factor subunit beta">
    <location>
        <begin position="1"/>
        <end position="107"/>
    </location>
</feature>
<feature type="region of interest" description="Disordered" evidence="2">
    <location>
        <begin position="55"/>
        <end position="107"/>
    </location>
</feature>
<feature type="compositionally biased region" description="Basic and acidic residues" evidence="2">
    <location>
        <begin position="65"/>
        <end position="101"/>
    </location>
</feature>
<gene>
    <name evidence="1" type="primary">ihfB</name>
    <name evidence="1" type="synonym">himD</name>
    <name type="ordered locus">BMA10247_0202</name>
</gene>
<accession>A3MHP1</accession>
<protein>
    <recommendedName>
        <fullName evidence="1">Integration host factor subunit beta</fullName>
        <shortName evidence="1">IHF-beta</shortName>
    </recommendedName>
</protein>
<proteinExistence type="inferred from homology"/>
<dbReference type="EMBL" id="CP000548">
    <property type="protein sequence ID" value="ABO07345.1"/>
    <property type="molecule type" value="Genomic_DNA"/>
</dbReference>
<dbReference type="RefSeq" id="WP_004189865.1">
    <property type="nucleotide sequence ID" value="NZ_CP007802.1"/>
</dbReference>
<dbReference type="SMR" id="A3MHP1"/>
<dbReference type="KEGG" id="bmaz:BM44_2789"/>
<dbReference type="KEGG" id="bmn:BMA10247_0202"/>
<dbReference type="PATRIC" id="fig|320389.8.peg.3148"/>
<dbReference type="GO" id="GO:0005694">
    <property type="term" value="C:chromosome"/>
    <property type="evidence" value="ECO:0007669"/>
    <property type="project" value="InterPro"/>
</dbReference>
<dbReference type="GO" id="GO:0005829">
    <property type="term" value="C:cytosol"/>
    <property type="evidence" value="ECO:0007669"/>
    <property type="project" value="TreeGrafter"/>
</dbReference>
<dbReference type="GO" id="GO:0003677">
    <property type="term" value="F:DNA binding"/>
    <property type="evidence" value="ECO:0007669"/>
    <property type="project" value="UniProtKB-UniRule"/>
</dbReference>
<dbReference type="GO" id="GO:0030527">
    <property type="term" value="F:structural constituent of chromatin"/>
    <property type="evidence" value="ECO:0007669"/>
    <property type="project" value="InterPro"/>
</dbReference>
<dbReference type="GO" id="GO:0006310">
    <property type="term" value="P:DNA recombination"/>
    <property type="evidence" value="ECO:0007669"/>
    <property type="project" value="UniProtKB-UniRule"/>
</dbReference>
<dbReference type="GO" id="GO:0006355">
    <property type="term" value="P:regulation of DNA-templated transcription"/>
    <property type="evidence" value="ECO:0007669"/>
    <property type="project" value="UniProtKB-UniRule"/>
</dbReference>
<dbReference type="GO" id="GO:0006417">
    <property type="term" value="P:regulation of translation"/>
    <property type="evidence" value="ECO:0007669"/>
    <property type="project" value="UniProtKB-UniRule"/>
</dbReference>
<dbReference type="CDD" id="cd13836">
    <property type="entry name" value="IHF_B"/>
    <property type="match status" value="1"/>
</dbReference>
<dbReference type="Gene3D" id="4.10.520.10">
    <property type="entry name" value="IHF-like DNA-binding proteins"/>
    <property type="match status" value="1"/>
</dbReference>
<dbReference type="HAMAP" id="MF_00381">
    <property type="entry name" value="IHF_beta"/>
    <property type="match status" value="1"/>
</dbReference>
<dbReference type="InterPro" id="IPR000119">
    <property type="entry name" value="Hist_DNA-bd"/>
</dbReference>
<dbReference type="InterPro" id="IPR010992">
    <property type="entry name" value="IHF-like_DNA-bd_dom_sf"/>
</dbReference>
<dbReference type="InterPro" id="IPR005685">
    <property type="entry name" value="IHF_beta"/>
</dbReference>
<dbReference type="NCBIfam" id="TIGR00988">
    <property type="entry name" value="hip"/>
    <property type="match status" value="1"/>
</dbReference>
<dbReference type="NCBIfam" id="NF001222">
    <property type="entry name" value="PRK00199.1"/>
    <property type="match status" value="1"/>
</dbReference>
<dbReference type="PANTHER" id="PTHR33175">
    <property type="entry name" value="DNA-BINDING PROTEIN HU"/>
    <property type="match status" value="1"/>
</dbReference>
<dbReference type="PANTHER" id="PTHR33175:SF5">
    <property type="entry name" value="INTEGRATION HOST FACTOR SUBUNIT BETA"/>
    <property type="match status" value="1"/>
</dbReference>
<dbReference type="Pfam" id="PF00216">
    <property type="entry name" value="Bac_DNA_binding"/>
    <property type="match status" value="1"/>
</dbReference>
<dbReference type="PRINTS" id="PR01727">
    <property type="entry name" value="DNABINDINGHU"/>
</dbReference>
<dbReference type="SMART" id="SM00411">
    <property type="entry name" value="BHL"/>
    <property type="match status" value="1"/>
</dbReference>
<dbReference type="SUPFAM" id="SSF47729">
    <property type="entry name" value="IHF-like DNA-binding proteins"/>
    <property type="match status" value="1"/>
</dbReference>
<comment type="function">
    <text evidence="1">This protein is one of the two subunits of integration host factor, a specific DNA-binding protein that functions in genetic recombination as well as in transcriptional and translational control.</text>
</comment>
<comment type="subunit">
    <text evidence="1">Heterodimer of an alpha and a beta chain.</text>
</comment>
<comment type="similarity">
    <text evidence="1">Belongs to the bacterial histone-like protein family.</text>
</comment>
<evidence type="ECO:0000255" key="1">
    <source>
        <dbReference type="HAMAP-Rule" id="MF_00381"/>
    </source>
</evidence>
<evidence type="ECO:0000256" key="2">
    <source>
        <dbReference type="SAM" id="MobiDB-lite"/>
    </source>
</evidence>
<keyword id="KW-0233">DNA recombination</keyword>
<keyword id="KW-0238">DNA-binding</keyword>
<keyword id="KW-0804">Transcription</keyword>
<keyword id="KW-0805">Transcription regulation</keyword>
<keyword id="KW-0810">Translation regulation</keyword>
<reference key="1">
    <citation type="journal article" date="2010" name="Genome Biol. Evol.">
        <title>Continuing evolution of Burkholderia mallei through genome reduction and large-scale rearrangements.</title>
        <authorList>
            <person name="Losada L."/>
            <person name="Ronning C.M."/>
            <person name="DeShazer D."/>
            <person name="Woods D."/>
            <person name="Fedorova N."/>
            <person name="Kim H.S."/>
            <person name="Shabalina S.A."/>
            <person name="Pearson T.R."/>
            <person name="Brinkac L."/>
            <person name="Tan P."/>
            <person name="Nandi T."/>
            <person name="Crabtree J."/>
            <person name="Badger J."/>
            <person name="Beckstrom-Sternberg S."/>
            <person name="Saqib M."/>
            <person name="Schutzer S.E."/>
            <person name="Keim P."/>
            <person name="Nierman W.C."/>
        </authorList>
    </citation>
    <scope>NUCLEOTIDE SEQUENCE [LARGE SCALE GENOMIC DNA]</scope>
    <source>
        <strain>NCTC 10247</strain>
    </source>
</reference>
<sequence>MTKSELVAQLASRFPQLVLKDADFAVKTMLDAMSDALSKGHRIEIRGFGSFGLNRRPARVGRNPKSGEKVQVPEKHVPHFKPGKELRERVDGRAGEPLKNDEPEDAQ</sequence>
<name>IHFB_BURM7</name>
<organism>
    <name type="scientific">Burkholderia mallei (strain NCTC 10247)</name>
    <dbReference type="NCBI Taxonomy" id="320389"/>
    <lineage>
        <taxon>Bacteria</taxon>
        <taxon>Pseudomonadati</taxon>
        <taxon>Pseudomonadota</taxon>
        <taxon>Betaproteobacteria</taxon>
        <taxon>Burkholderiales</taxon>
        <taxon>Burkholderiaceae</taxon>
        <taxon>Burkholderia</taxon>
        <taxon>pseudomallei group</taxon>
    </lineage>
</organism>